<accession>A8MRY9</accession>
<accession>O49364</accession>
<keyword id="KW-0025">Alternative splicing</keyword>
<keyword id="KW-0333">Golgi apparatus</keyword>
<keyword id="KW-0472">Membrane</keyword>
<keyword id="KW-1185">Reference proteome</keyword>
<keyword id="KW-0346">Stress response</keyword>
<keyword id="KW-0762">Sugar transport</keyword>
<keyword id="KW-0812">Transmembrane</keyword>
<keyword id="KW-1133">Transmembrane helix</keyword>
<keyword id="KW-0813">Transport</keyword>
<name>UGNT1_ARATH</name>
<comment type="function">
    <text evidence="3">Mediates the transport of UDP-N-acetylglucosamine (UDP-GlcNAc) across the Golgi apparatus membrane (PubMed:30224661). Delivers an essential substrate for the maturation of N-glycans and the GlcNAc-containing glycosyl inositol phosphorylceramide (GIPC) class of sphingolipids in the Golgi apparatus (PubMed:30224661).</text>
</comment>
<comment type="biophysicochemical properties">
    <kinetics>
        <KM evidence="3">9 uM for UDP-N-acetyl-D-glucosamine</KM>
    </kinetics>
</comment>
<comment type="subcellular location">
    <subcellularLocation>
        <location evidence="3">Golgi apparatus membrane</location>
        <topology evidence="1">Multi-pass membrane protein</topology>
    </subcellularLocation>
</comment>
<comment type="alternative products">
    <event type="alternative splicing"/>
    <isoform>
        <id>A8MRY9-1</id>
        <name>1</name>
        <sequence type="displayed"/>
    </isoform>
    <text>A number of isoforms are produced. According to EST sequences.</text>
</comment>
<comment type="tissue specificity">
    <text evidence="3">Expressed in roots, leaves, stems, flowers and siliques.</text>
</comment>
<comment type="disruption phenotype">
    <text evidence="3">No visible phenotype under normal growth conditions, but mutant plants have increased levels of high mannose N-glycans, decreased levels of complex N-glycans, and are insensitive to root growth inhibition by salt stress.</text>
</comment>
<comment type="similarity">
    <text evidence="5">Belongs to the TPT transporter family. UGnT (TC 2.A.7.15) subfamily.</text>
</comment>
<comment type="sequence caution" evidence="5">
    <conflict type="frameshift">
        <sequence resource="EMBL" id="AY075601"/>
    </conflict>
</comment>
<comment type="sequence caution" evidence="5">
    <conflict type="erroneous gene model prediction">
        <sequence resource="EMBL-CDS" id="CAA16963"/>
    </conflict>
</comment>
<comment type="sequence caution" evidence="5">
    <conflict type="erroneous gene model prediction">
        <sequence resource="EMBL-CDS" id="CAB79945"/>
    </conflict>
</comment>
<organism>
    <name type="scientific">Arabidopsis thaliana</name>
    <name type="common">Mouse-ear cress</name>
    <dbReference type="NCBI Taxonomy" id="3702"/>
    <lineage>
        <taxon>Eukaryota</taxon>
        <taxon>Viridiplantae</taxon>
        <taxon>Streptophyta</taxon>
        <taxon>Embryophyta</taxon>
        <taxon>Tracheophyta</taxon>
        <taxon>Spermatophyta</taxon>
        <taxon>Magnoliopsida</taxon>
        <taxon>eudicotyledons</taxon>
        <taxon>Gunneridae</taxon>
        <taxon>Pentapetalae</taxon>
        <taxon>rosids</taxon>
        <taxon>malvids</taxon>
        <taxon>Brassicales</taxon>
        <taxon>Brassicaceae</taxon>
        <taxon>Camelineae</taxon>
        <taxon>Arabidopsis</taxon>
    </lineage>
</organism>
<reference key="1">
    <citation type="journal article" date="1999" name="Nature">
        <title>Sequence and analysis of chromosome 4 of the plant Arabidopsis thaliana.</title>
        <authorList>
            <person name="Mayer K.F.X."/>
            <person name="Schueller C."/>
            <person name="Wambutt R."/>
            <person name="Murphy G."/>
            <person name="Volckaert G."/>
            <person name="Pohl T."/>
            <person name="Duesterhoeft A."/>
            <person name="Stiekema W."/>
            <person name="Entian K.-D."/>
            <person name="Terryn N."/>
            <person name="Harris B."/>
            <person name="Ansorge W."/>
            <person name="Brandt P."/>
            <person name="Grivell L.A."/>
            <person name="Rieger M."/>
            <person name="Weichselgartner M."/>
            <person name="de Simone V."/>
            <person name="Obermaier B."/>
            <person name="Mache R."/>
            <person name="Mueller M."/>
            <person name="Kreis M."/>
            <person name="Delseny M."/>
            <person name="Puigdomenech P."/>
            <person name="Watson M."/>
            <person name="Schmidtheini T."/>
            <person name="Reichert B."/>
            <person name="Portetelle D."/>
            <person name="Perez-Alonso M."/>
            <person name="Boutry M."/>
            <person name="Bancroft I."/>
            <person name="Vos P."/>
            <person name="Hoheisel J."/>
            <person name="Zimmermann W."/>
            <person name="Wedler H."/>
            <person name="Ridley P."/>
            <person name="Langham S.-A."/>
            <person name="McCullagh B."/>
            <person name="Bilham L."/>
            <person name="Robben J."/>
            <person name="van der Schueren J."/>
            <person name="Grymonprez B."/>
            <person name="Chuang Y.-J."/>
            <person name="Vandenbussche F."/>
            <person name="Braeken M."/>
            <person name="Weltjens I."/>
            <person name="Voet M."/>
            <person name="Bastiaens I."/>
            <person name="Aert R."/>
            <person name="Defoor E."/>
            <person name="Weitzenegger T."/>
            <person name="Bothe G."/>
            <person name="Ramsperger U."/>
            <person name="Hilbert H."/>
            <person name="Braun M."/>
            <person name="Holzer E."/>
            <person name="Brandt A."/>
            <person name="Peters S."/>
            <person name="van Staveren M."/>
            <person name="Dirkse W."/>
            <person name="Mooijman P."/>
            <person name="Klein Lankhorst R."/>
            <person name="Rose M."/>
            <person name="Hauf J."/>
            <person name="Koetter P."/>
            <person name="Berneiser S."/>
            <person name="Hempel S."/>
            <person name="Feldpausch M."/>
            <person name="Lamberth S."/>
            <person name="Van den Daele H."/>
            <person name="De Keyser A."/>
            <person name="Buysshaert C."/>
            <person name="Gielen J."/>
            <person name="Villarroel R."/>
            <person name="De Clercq R."/>
            <person name="van Montagu M."/>
            <person name="Rogers J."/>
            <person name="Cronin A."/>
            <person name="Quail M.A."/>
            <person name="Bray-Allen S."/>
            <person name="Clark L."/>
            <person name="Doggett J."/>
            <person name="Hall S."/>
            <person name="Kay M."/>
            <person name="Lennard N."/>
            <person name="McLay K."/>
            <person name="Mayes R."/>
            <person name="Pettett A."/>
            <person name="Rajandream M.A."/>
            <person name="Lyne M."/>
            <person name="Benes V."/>
            <person name="Rechmann S."/>
            <person name="Borkova D."/>
            <person name="Bloecker H."/>
            <person name="Scharfe M."/>
            <person name="Grimm M."/>
            <person name="Loehnert T.-H."/>
            <person name="Dose S."/>
            <person name="de Haan M."/>
            <person name="Maarse A.C."/>
            <person name="Schaefer M."/>
            <person name="Mueller-Auer S."/>
            <person name="Gabel C."/>
            <person name="Fuchs M."/>
            <person name="Fartmann B."/>
            <person name="Granderath K."/>
            <person name="Dauner D."/>
            <person name="Herzl A."/>
            <person name="Neumann S."/>
            <person name="Argiriou A."/>
            <person name="Vitale D."/>
            <person name="Liguori R."/>
            <person name="Piravandi E."/>
            <person name="Massenet O."/>
            <person name="Quigley F."/>
            <person name="Clabauld G."/>
            <person name="Muendlein A."/>
            <person name="Felber R."/>
            <person name="Schnabl S."/>
            <person name="Hiller R."/>
            <person name="Schmidt W."/>
            <person name="Lecharny A."/>
            <person name="Aubourg S."/>
            <person name="Chefdor F."/>
            <person name="Cooke R."/>
            <person name="Berger C."/>
            <person name="Monfort A."/>
            <person name="Casacuberta E."/>
            <person name="Gibbons T."/>
            <person name="Weber N."/>
            <person name="Vandenbol M."/>
            <person name="Bargues M."/>
            <person name="Terol J."/>
            <person name="Torres A."/>
            <person name="Perez-Perez A."/>
            <person name="Purnelle B."/>
            <person name="Bent E."/>
            <person name="Johnson S."/>
            <person name="Tacon D."/>
            <person name="Jesse T."/>
            <person name="Heijnen L."/>
            <person name="Schwarz S."/>
            <person name="Scholler P."/>
            <person name="Heber S."/>
            <person name="Francs P."/>
            <person name="Bielke C."/>
            <person name="Frishman D."/>
            <person name="Haase D."/>
            <person name="Lemcke K."/>
            <person name="Mewes H.-W."/>
            <person name="Stocker S."/>
            <person name="Zaccaria P."/>
            <person name="Bevan M."/>
            <person name="Wilson R.K."/>
            <person name="de la Bastide M."/>
            <person name="Habermann K."/>
            <person name="Parnell L."/>
            <person name="Dedhia N."/>
            <person name="Gnoj L."/>
            <person name="Schutz K."/>
            <person name="Huang E."/>
            <person name="Spiegel L."/>
            <person name="Sekhon M."/>
            <person name="Murray J."/>
            <person name="Sheet P."/>
            <person name="Cordes M."/>
            <person name="Abu-Threideh J."/>
            <person name="Stoneking T."/>
            <person name="Kalicki J."/>
            <person name="Graves T."/>
            <person name="Harmon G."/>
            <person name="Edwards J."/>
            <person name="Latreille P."/>
            <person name="Courtney L."/>
            <person name="Cloud J."/>
            <person name="Abbott A."/>
            <person name="Scott K."/>
            <person name="Johnson D."/>
            <person name="Minx P."/>
            <person name="Bentley D."/>
            <person name="Fulton B."/>
            <person name="Miller N."/>
            <person name="Greco T."/>
            <person name="Kemp K."/>
            <person name="Kramer J."/>
            <person name="Fulton L."/>
            <person name="Mardis E."/>
            <person name="Dante M."/>
            <person name="Pepin K."/>
            <person name="Hillier L.W."/>
            <person name="Nelson J."/>
            <person name="Spieth J."/>
            <person name="Ryan E."/>
            <person name="Andrews S."/>
            <person name="Geisel C."/>
            <person name="Layman D."/>
            <person name="Du H."/>
            <person name="Ali J."/>
            <person name="Berghoff A."/>
            <person name="Jones K."/>
            <person name="Drone K."/>
            <person name="Cotton M."/>
            <person name="Joshu C."/>
            <person name="Antonoiu B."/>
            <person name="Zidanic M."/>
            <person name="Strong C."/>
            <person name="Sun H."/>
            <person name="Lamar B."/>
            <person name="Yordan C."/>
            <person name="Ma P."/>
            <person name="Zhong J."/>
            <person name="Preston R."/>
            <person name="Vil D."/>
            <person name="Shekher M."/>
            <person name="Matero A."/>
            <person name="Shah R."/>
            <person name="Swaby I.K."/>
            <person name="O'Shaughnessy A."/>
            <person name="Rodriguez M."/>
            <person name="Hoffman J."/>
            <person name="Till S."/>
            <person name="Granat S."/>
            <person name="Shohdy N."/>
            <person name="Hasegawa A."/>
            <person name="Hameed A."/>
            <person name="Lodhi M."/>
            <person name="Johnson A."/>
            <person name="Chen E."/>
            <person name="Marra M.A."/>
            <person name="Martienssen R."/>
            <person name="McCombie W.R."/>
        </authorList>
    </citation>
    <scope>NUCLEOTIDE SEQUENCE [LARGE SCALE GENOMIC DNA]</scope>
    <source>
        <strain>cv. Columbia</strain>
    </source>
</reference>
<reference key="2">
    <citation type="journal article" date="2017" name="Plant J.">
        <title>Araport11: a complete reannotation of the Arabidopsis thaliana reference genome.</title>
        <authorList>
            <person name="Cheng C.Y."/>
            <person name="Krishnakumar V."/>
            <person name="Chan A.P."/>
            <person name="Thibaud-Nissen F."/>
            <person name="Schobel S."/>
            <person name="Town C.D."/>
        </authorList>
    </citation>
    <scope>GENOME REANNOTATION</scope>
    <source>
        <strain>cv. Columbia</strain>
    </source>
</reference>
<reference key="3">
    <citation type="journal article" date="2003" name="Science">
        <title>Empirical analysis of transcriptional activity in the Arabidopsis genome.</title>
        <authorList>
            <person name="Yamada K."/>
            <person name="Lim J."/>
            <person name="Dale J.M."/>
            <person name="Chen H."/>
            <person name="Shinn P."/>
            <person name="Palm C.J."/>
            <person name="Southwick A.M."/>
            <person name="Wu H.C."/>
            <person name="Kim C.J."/>
            <person name="Nguyen M."/>
            <person name="Pham P.K."/>
            <person name="Cheuk R.F."/>
            <person name="Karlin-Newmann G."/>
            <person name="Liu S.X."/>
            <person name="Lam B."/>
            <person name="Sakano H."/>
            <person name="Wu T."/>
            <person name="Yu G."/>
            <person name="Miranda M."/>
            <person name="Quach H.L."/>
            <person name="Tripp M."/>
            <person name="Chang C.H."/>
            <person name="Lee J.M."/>
            <person name="Toriumi M.J."/>
            <person name="Chan M.M."/>
            <person name="Tang C.C."/>
            <person name="Onodera C.S."/>
            <person name="Deng J.M."/>
            <person name="Akiyama K."/>
            <person name="Ansari Y."/>
            <person name="Arakawa T."/>
            <person name="Banh J."/>
            <person name="Banno F."/>
            <person name="Bowser L."/>
            <person name="Brooks S.Y."/>
            <person name="Carninci P."/>
            <person name="Chao Q."/>
            <person name="Choy N."/>
            <person name="Enju A."/>
            <person name="Goldsmith A.D."/>
            <person name="Gurjal M."/>
            <person name="Hansen N.F."/>
            <person name="Hayashizaki Y."/>
            <person name="Johnson-Hopson C."/>
            <person name="Hsuan V.W."/>
            <person name="Iida K."/>
            <person name="Karnes M."/>
            <person name="Khan S."/>
            <person name="Koesema E."/>
            <person name="Ishida J."/>
            <person name="Jiang P.X."/>
            <person name="Jones T."/>
            <person name="Kawai J."/>
            <person name="Kamiya A."/>
            <person name="Meyers C."/>
            <person name="Nakajima M."/>
            <person name="Narusaka M."/>
            <person name="Seki M."/>
            <person name="Sakurai T."/>
            <person name="Satou M."/>
            <person name="Tamse R."/>
            <person name="Vaysberg M."/>
            <person name="Wallender E.K."/>
            <person name="Wong C."/>
            <person name="Yamamura Y."/>
            <person name="Yuan S."/>
            <person name="Shinozaki K."/>
            <person name="Davis R.W."/>
            <person name="Theologis A."/>
            <person name="Ecker J.R."/>
        </authorList>
    </citation>
    <scope>NUCLEOTIDE SEQUENCE [LARGE SCALE MRNA]</scope>
    <source>
        <strain>cv. Columbia</strain>
    </source>
</reference>
<reference key="4">
    <citation type="journal article" date="2014" name="Proc. Natl. Acad. Sci. U.S.A.">
        <title>The Golgi localized bifunctional UDP-rhamnose/UDP-galactose transporter family of Arabidopsis.</title>
        <authorList>
            <person name="Rautengarten C."/>
            <person name="Ebert B."/>
            <person name="Moreno I."/>
            <person name="Temple H."/>
            <person name="Herter T."/>
            <person name="Link B."/>
            <person name="Donas-Cofre D."/>
            <person name="Moreno A."/>
            <person name="Saez-Aguayo S."/>
            <person name="Blanco F."/>
            <person name="Mortimer J.C."/>
            <person name="Schultink A."/>
            <person name="Reiter W.D."/>
            <person name="Dupree P."/>
            <person name="Pauly M."/>
            <person name="Heazlewood J.L."/>
            <person name="Scheller H.V."/>
            <person name="Orellana A."/>
        </authorList>
    </citation>
    <scope>GENE FAMILY</scope>
</reference>
<reference key="5">
    <citation type="journal article" date="2018" name="Nat. Plants">
        <title>A Golgi UDP-GlcNAc transporter delivers substrates for N-linked glycans and sphingolipids.</title>
        <authorList>
            <person name="Ebert B."/>
            <person name="Rautengarten C."/>
            <person name="McFarlane H.E."/>
            <person name="Rupasinghe T."/>
            <person name="Zeng W."/>
            <person name="Ford K."/>
            <person name="Scheller H.V."/>
            <person name="Bacic A."/>
            <person name="Roessner U."/>
            <person name="Persson S."/>
            <person name="Heazlewood J.L."/>
        </authorList>
    </citation>
    <scope>FUNCTION</scope>
    <scope>BIOPHYSICOCHEMICAL PROPERTIES</scope>
    <scope>SUBCELLULAR LOCATION</scope>
    <scope>TISSUE SPECIFICITY</scope>
    <scope>DISRUPTION PHENOTYPE</scope>
</reference>
<dbReference type="EMBL" id="AL021811">
    <property type="protein sequence ID" value="CAA16963.1"/>
    <property type="status" value="ALT_SEQ"/>
    <property type="molecule type" value="Genomic_DNA"/>
</dbReference>
<dbReference type="EMBL" id="AL161580">
    <property type="protein sequence ID" value="CAB79945.1"/>
    <property type="status" value="ALT_SEQ"/>
    <property type="molecule type" value="Genomic_DNA"/>
</dbReference>
<dbReference type="EMBL" id="CP002687">
    <property type="protein sequence ID" value="AEE86030.1"/>
    <property type="molecule type" value="Genomic_DNA"/>
</dbReference>
<dbReference type="EMBL" id="AY075601">
    <property type="status" value="NOT_ANNOTATED_CDS"/>
    <property type="molecule type" value="mRNA"/>
</dbReference>
<dbReference type="PIR" id="T05401">
    <property type="entry name" value="T05401"/>
</dbReference>
<dbReference type="RefSeq" id="NP_001078479.1">
    <molecule id="A8MRY9-1"/>
    <property type="nucleotide sequence ID" value="NM_001085010.2"/>
</dbReference>
<dbReference type="SMR" id="A8MRY9"/>
<dbReference type="FunCoup" id="A8MRY9">
    <property type="interactions" value="1129"/>
</dbReference>
<dbReference type="STRING" id="3702.A8MRY9"/>
<dbReference type="PaxDb" id="3702-AT4G32272.2"/>
<dbReference type="ProteomicsDB" id="249076">
    <molecule id="A8MRY9-1"/>
</dbReference>
<dbReference type="EnsemblPlants" id="AT4G32272.1">
    <molecule id="A8MRY9-1"/>
    <property type="protein sequence ID" value="AT4G32272.1"/>
    <property type="gene ID" value="AT4G32272"/>
</dbReference>
<dbReference type="GeneID" id="5008177"/>
<dbReference type="Gramene" id="AT4G32272.1">
    <molecule id="A8MRY9-1"/>
    <property type="protein sequence ID" value="AT4G32272.1"/>
    <property type="gene ID" value="AT4G32272"/>
</dbReference>
<dbReference type="KEGG" id="ath:AT4G32272"/>
<dbReference type="Araport" id="AT4G32272"/>
<dbReference type="TAIR" id="AT4G32272">
    <property type="gene designation" value="UGNT1"/>
</dbReference>
<dbReference type="eggNOG" id="KOG1444">
    <property type="taxonomic scope" value="Eukaryota"/>
</dbReference>
<dbReference type="HOGENOM" id="CLU_040726_0_0_1"/>
<dbReference type="InParanoid" id="A8MRY9"/>
<dbReference type="OMA" id="LMFYCNI"/>
<dbReference type="OrthoDB" id="417037at2759"/>
<dbReference type="PhylomeDB" id="A8MRY9"/>
<dbReference type="PRO" id="PR:A8MRY9"/>
<dbReference type="Proteomes" id="UP000006548">
    <property type="component" value="Chromosome 4"/>
</dbReference>
<dbReference type="ExpressionAtlas" id="A8MRY9">
    <property type="expression patterns" value="baseline and differential"/>
</dbReference>
<dbReference type="GO" id="GO:0000139">
    <property type="term" value="C:Golgi membrane"/>
    <property type="evidence" value="ECO:0000314"/>
    <property type="project" value="UniProtKB"/>
</dbReference>
<dbReference type="GO" id="GO:0005338">
    <property type="term" value="F:nucleotide-sugar transmembrane transporter activity"/>
    <property type="evidence" value="ECO:0000314"/>
    <property type="project" value="UniProtKB"/>
</dbReference>
<dbReference type="GO" id="GO:1990569">
    <property type="term" value="P:UDP-N-acetylglucosamine transmembrane transport"/>
    <property type="evidence" value="ECO:0000314"/>
    <property type="project" value="UniProtKB"/>
</dbReference>
<dbReference type="InterPro" id="IPR004853">
    <property type="entry name" value="Sugar_P_trans_dom"/>
</dbReference>
<dbReference type="InterPro" id="IPR050186">
    <property type="entry name" value="TPT_transporter"/>
</dbReference>
<dbReference type="PANTHER" id="PTHR11132">
    <property type="entry name" value="SOLUTE CARRIER FAMILY 35"/>
    <property type="match status" value="1"/>
</dbReference>
<dbReference type="Pfam" id="PF03151">
    <property type="entry name" value="TPT"/>
    <property type="match status" value="1"/>
</dbReference>
<sequence>MRNNPVLPVSDPPLAGENDSDGKGVDDRLFKGSAMTKRGAYAALSYMACAVMLVLFNKAALSSYDFPCVNVITLFQMVSSSLFLYALRRRKIISFTAADSFSIDSASTFVPVKTLFHTLPLAIAYLLYMLASMASVRGVNVPMYTTLRRTTVAFTMVIEYMLTGQRYTRSIIGSVGIILLGAFFAGARDLSFDFYGYGVVFLANISTAVYLATIARTGKSSGLNSFGLMWSNGIICGPILMIWTFICGDLEKTINFPHLLTPGFMVVLLCSCVLAFVLNYCIFLNTTLNSALTQTICGNMKDLFTVGLGWMLFGGLPFDLMNVIGQLFGFFGSGLYAYYKIIGR</sequence>
<feature type="chain" id="PRO_0000439530" description="UDP-N-acetylglucosamine transporter UGNT1">
    <location>
        <begin position="1"/>
        <end position="344"/>
    </location>
</feature>
<feature type="transmembrane region" description="Helical" evidence="1">
    <location>
        <begin position="41"/>
        <end position="61"/>
    </location>
</feature>
<feature type="transmembrane region" description="Helical" evidence="1">
    <location>
        <begin position="66"/>
        <end position="86"/>
    </location>
</feature>
<feature type="transmembrane region" description="Helical" evidence="1">
    <location>
        <begin position="92"/>
        <end position="112"/>
    </location>
</feature>
<feature type="transmembrane region" description="Helical" evidence="1">
    <location>
        <begin position="114"/>
        <end position="134"/>
    </location>
</feature>
<feature type="transmembrane region" description="Helical" evidence="1">
    <location>
        <begin position="167"/>
        <end position="187"/>
    </location>
</feature>
<feature type="transmembrane region" description="Helical" evidence="1">
    <location>
        <begin position="194"/>
        <end position="214"/>
    </location>
</feature>
<feature type="transmembrane region" description="Helical" evidence="1">
    <location>
        <begin position="226"/>
        <end position="246"/>
    </location>
</feature>
<feature type="transmembrane region" description="Helical" evidence="1">
    <location>
        <begin position="264"/>
        <end position="284"/>
    </location>
</feature>
<feature type="transmembrane region" description="Helical" evidence="1">
    <location>
        <begin position="304"/>
        <end position="324"/>
    </location>
</feature>
<feature type="region of interest" description="Disordered" evidence="2">
    <location>
        <begin position="1"/>
        <end position="23"/>
    </location>
</feature>
<evidence type="ECO:0000255" key="1"/>
<evidence type="ECO:0000256" key="2">
    <source>
        <dbReference type="SAM" id="MobiDB-lite"/>
    </source>
</evidence>
<evidence type="ECO:0000269" key="3">
    <source>
    </source>
</evidence>
<evidence type="ECO:0000303" key="4">
    <source>
    </source>
</evidence>
<evidence type="ECO:0000305" key="5"/>
<evidence type="ECO:0000312" key="6">
    <source>
        <dbReference type="Araport" id="AT4G32272"/>
    </source>
</evidence>
<evidence type="ECO:0000312" key="7">
    <source>
        <dbReference type="EMBL" id="CAA16963.1"/>
    </source>
</evidence>
<gene>
    <name evidence="4" type="primary">UGNT1</name>
    <name evidence="6" type="ordered locus">At4g32272</name>
    <name evidence="7" type="ORF">F10M6.90</name>
</gene>
<proteinExistence type="evidence at protein level"/>
<protein>
    <recommendedName>
        <fullName evidence="5">UDP-N-acetylglucosamine transporter UGNT1</fullName>
        <shortName evidence="4">UDP-GlcNAc transporter 1</shortName>
    </recommendedName>
    <alternativeName>
        <fullName evidence="5">Nucleotide-sugar uncharacterized transporter 3</fullName>
    </alternativeName>
</protein>